<accession>A0A411KUQ8</accession>
<organism evidence="5">
    <name type="scientific">Acremonium sp</name>
    <dbReference type="NCBI Taxonomy" id="2046025"/>
    <lineage>
        <taxon>Eukaryota</taxon>
        <taxon>Fungi</taxon>
        <taxon>Dikarya</taxon>
        <taxon>Ascomycota</taxon>
        <taxon>Pezizomycotina</taxon>
        <taxon>Sordariomycetes</taxon>
        <taxon>Hypocreomycetidae</taxon>
        <taxon>Hypocreales</taxon>
        <taxon>Hypocreales incertae sedis</taxon>
        <taxon>Acremonium</taxon>
    </lineage>
</organism>
<name>UCSG_ACRSP</name>
<proteinExistence type="inferred from homology"/>
<keyword id="KW-0028">Amino-acid biosynthesis</keyword>
<keyword id="KW-0521">NADP</keyword>
<keyword id="KW-0560">Oxidoreductase</keyword>
<keyword id="KW-0641">Proline biosynthesis</keyword>
<reference key="1">
    <citation type="journal article" date="2018" name="J. Am. Chem. Soc.">
        <title>Genome mining and assembly-line biosynthesis of the UCS1025A pyrrolizidinone family of fungal alkaloids.</title>
        <authorList>
            <person name="Li L."/>
            <person name="Tang M.C."/>
            <person name="Tang S."/>
            <person name="Gao S."/>
            <person name="Soliman S."/>
            <person name="Hang L."/>
            <person name="Xu W."/>
            <person name="Ye T."/>
            <person name="Watanabe K."/>
            <person name="Tang Y."/>
        </authorList>
    </citation>
    <scope>NUCLEOTIDE SEQUENCE [GENOMIC DNA]</scope>
    <scope>FUNCTION</scope>
    <scope>PATHWAY</scope>
    <source>
        <strain>KY4917</strain>
    </source>
</reference>
<sequence length="318" mass="33213">MRNGAHRCESAMPGVTMTVLGCGKLGTAIIQGLLRSCPKASEAAPQKYLYPISTVIAAVRSKDRLESLIKSLVAEINDHTCPLDFVIANNVEAVRRADVVFLACHPNQATECLGGIGMQDAISGKLVISVLGGVSVATLEQAVYSSTRRPASGQAPCHIVQAIANTAAARQQSVTVVAEEETANSHEKGSLCEDVLRRLGQVSYVSPDLMPAVTALCASGTAFFTTYLDAMIQGAVSEGLGEDVATRLAALTMAGAANAVISGEHPAAVTSRVTTPGGVTAEGLKVLREGDLRTLTAKAISATTRRLRLVDEKSRKQS</sequence>
<gene>
    <name evidence="2" type="primary">ucsG</name>
</gene>
<evidence type="ECO:0000269" key="1">
    <source>
    </source>
</evidence>
<evidence type="ECO:0000303" key="2">
    <source>
    </source>
</evidence>
<evidence type="ECO:0000305" key="3"/>
<evidence type="ECO:0000305" key="4">
    <source>
    </source>
</evidence>
<evidence type="ECO:0000312" key="5">
    <source>
        <dbReference type="EMBL" id="QBC88151.1"/>
    </source>
</evidence>
<comment type="function">
    <text evidence="1 4">Pyrroline-5-carboxylate reductase; part of the gene cluster that mediates the biosynthesis of UCS1025A, a member of the pyrrolizidinone family that acts as a strong telomerase inhibitor and displays potent antibacterial and antitumor properties (PubMed:29373009). These compounds share a hemiaminal-containing pyrrolizidinone core fused with a gamma-lactone, giving a furopyrrolizidine that is connected to a decalin fragment (PubMed:29373009). The polyketide synthase module (PKS) of the PKS-NRPS ucsA is responsible for the synthesis of the polyketide backbone via the condensation of an acetyl-CoA starter unit with 6 malonyl-CoA units (PubMed:29373009). The downstream nonribosomal peptide synthetase (NRPS) module then amidates the carboxyl end of the polyketide with a 2S,3S-methylproline derived from L-isoleucine by the 2-oxoglutarate-dependent dioxygenase ucsF which converts L-isoleucine to (4S,5S)-4-methylpyrroline-5-carboxylate that is further converted to 2S,3S-methylproline by the pyrroline-5-carboxylate reductase ucsG (PubMed:29373009). Reductive release of the completed aminoacyl polyketide from the assembly line can form the 3-pyrrolin-2-one structure via an intramolecular Knoevenagel reaction (PubMed:29373009). Because ucsA lacks a designated enoylreductase (ER) domain, the required activity is provided the enoyl reductase ucsL (PubMed:29373009). This keto acyclic precursor is the substrate of the Diels-Alderase ucsH, that catalyzes the Diels-Alder cycloaddition (PubMed:29373009). Oxidation of the 3S-methyl group to a carboxylate by the cytochrome P450 monooxygenase ucsK allows an oxa-Michael cyclization that might involve the reductase/dehydrogenase ucsI and which furnishes the furopyrrolizidine (PubMed:29373009). The oxidase ucsJ likely plays a critical role in stereoselective reduction of the C5-C6 double bond to afford the required R-configured carboxylate group (Probable). Further enolization and oxidation at C5 by an unidentified enzyme affords the last intermediate that can undergo oxa-Michael cyclization to yield UCS1025A (Probable).</text>
</comment>
<comment type="pathway">
    <text evidence="1">Mycotoxin biosynthesis.</text>
</comment>
<comment type="similarity">
    <text evidence="3">Belongs to the pyrroline-5-carboxylate reductase family.</text>
</comment>
<feature type="chain" id="PRO_0000450537" description="Pyrroline-5-carboxylate reductase ucsG">
    <location>
        <begin position="1"/>
        <end position="318"/>
    </location>
</feature>
<dbReference type="EC" id="1.5.1.-" evidence="1"/>
<dbReference type="EMBL" id="MH375770">
    <property type="protein sequence ID" value="QBC88151.1"/>
    <property type="molecule type" value="Genomic_DNA"/>
</dbReference>
<dbReference type="SMR" id="A0A411KUQ8"/>
<dbReference type="GO" id="GO:0004735">
    <property type="term" value="F:pyrroline-5-carboxylate reductase activity"/>
    <property type="evidence" value="ECO:0007669"/>
    <property type="project" value="InterPro"/>
</dbReference>
<dbReference type="GO" id="GO:0055129">
    <property type="term" value="P:L-proline biosynthetic process"/>
    <property type="evidence" value="ECO:0007669"/>
    <property type="project" value="TreeGrafter"/>
</dbReference>
<dbReference type="FunFam" id="1.10.3730.10:FF:000001">
    <property type="entry name" value="Pyrroline-5-carboxylate reductase"/>
    <property type="match status" value="1"/>
</dbReference>
<dbReference type="Gene3D" id="3.40.50.720">
    <property type="entry name" value="NAD(P)-binding Rossmann-like Domain"/>
    <property type="match status" value="1"/>
</dbReference>
<dbReference type="Gene3D" id="1.10.3730.10">
    <property type="entry name" value="ProC C-terminal domain-like"/>
    <property type="match status" value="1"/>
</dbReference>
<dbReference type="HAMAP" id="MF_01925">
    <property type="entry name" value="P5C_reductase"/>
    <property type="match status" value="1"/>
</dbReference>
<dbReference type="InterPro" id="IPR008927">
    <property type="entry name" value="6-PGluconate_DH-like_C_sf"/>
</dbReference>
<dbReference type="InterPro" id="IPR036291">
    <property type="entry name" value="NAD(P)-bd_dom_sf"/>
</dbReference>
<dbReference type="InterPro" id="IPR028939">
    <property type="entry name" value="P5C_Rdtase_cat_N"/>
</dbReference>
<dbReference type="InterPro" id="IPR029036">
    <property type="entry name" value="P5CR_dimer"/>
</dbReference>
<dbReference type="InterPro" id="IPR000304">
    <property type="entry name" value="Pyrroline-COOH_reductase"/>
</dbReference>
<dbReference type="PANTHER" id="PTHR11645">
    <property type="entry name" value="PYRROLINE-5-CARBOXYLATE REDUCTASE"/>
    <property type="match status" value="1"/>
</dbReference>
<dbReference type="PANTHER" id="PTHR11645:SF0">
    <property type="entry name" value="PYRROLINE-5-CARBOXYLATE REDUCTASE 3"/>
    <property type="match status" value="1"/>
</dbReference>
<dbReference type="Pfam" id="PF03807">
    <property type="entry name" value="F420_oxidored"/>
    <property type="match status" value="1"/>
</dbReference>
<dbReference type="Pfam" id="PF14748">
    <property type="entry name" value="P5CR_dimer"/>
    <property type="match status" value="1"/>
</dbReference>
<dbReference type="PIRSF" id="PIRSF000193">
    <property type="entry name" value="Pyrrol-5-carb_rd"/>
    <property type="match status" value="1"/>
</dbReference>
<dbReference type="SUPFAM" id="SSF48179">
    <property type="entry name" value="6-phosphogluconate dehydrogenase C-terminal domain-like"/>
    <property type="match status" value="1"/>
</dbReference>
<dbReference type="SUPFAM" id="SSF51735">
    <property type="entry name" value="NAD(P)-binding Rossmann-fold domains"/>
    <property type="match status" value="1"/>
</dbReference>
<protein>
    <recommendedName>
        <fullName evidence="2">Pyrroline-5-carboxylate reductase ucsG</fullName>
        <ecNumber evidence="1">1.5.1.-</ecNumber>
    </recommendedName>
    <alternativeName>
        <fullName evidence="2">UCS1025A pyrrolizidinone biosynthesis cluster protein G</fullName>
    </alternativeName>
</protein>